<protein>
    <recommendedName>
        <fullName evidence="1">Large ribosomal subunit protein uL1</fullName>
    </recommendedName>
    <alternativeName>
        <fullName evidence="2">50S ribosomal protein L1</fullName>
    </alternativeName>
</protein>
<proteinExistence type="inferred from homology"/>
<organism>
    <name type="scientific">Geotalea daltonii (strain DSM 22248 / JCM 15807 / FRC-32)</name>
    <name type="common">Geobacter daltonii</name>
    <dbReference type="NCBI Taxonomy" id="316067"/>
    <lineage>
        <taxon>Bacteria</taxon>
        <taxon>Pseudomonadati</taxon>
        <taxon>Thermodesulfobacteriota</taxon>
        <taxon>Desulfuromonadia</taxon>
        <taxon>Geobacterales</taxon>
        <taxon>Geobacteraceae</taxon>
        <taxon>Geotalea</taxon>
    </lineage>
</organism>
<sequence>MPTSKKLKDALAKVDRSKSYTLNDGLELVRSSAYAKFTETVDVAVRLGVDPRHADQMVRGAVVLPNGLGKEVRVLVFAKGEKEKEARDAGADFVGADDLVAKIQEGWFEFDTAIATPDMMGVVGKIGKLLGPRGLMPNPKVGTVTFDVGRAVNESKSGKVEFRVEKAGIIHAPVGKVSFETDKLKENILALIDALVKSKPSAAKGTYIKKISVSSTMGPGVNLDVSDVSSQVI</sequence>
<evidence type="ECO:0000255" key="1">
    <source>
        <dbReference type="HAMAP-Rule" id="MF_01318"/>
    </source>
</evidence>
<evidence type="ECO:0000305" key="2"/>
<gene>
    <name evidence="1" type="primary">rplA</name>
    <name type="ordered locus">Geob_3635</name>
</gene>
<keyword id="KW-1185">Reference proteome</keyword>
<keyword id="KW-0678">Repressor</keyword>
<keyword id="KW-0687">Ribonucleoprotein</keyword>
<keyword id="KW-0689">Ribosomal protein</keyword>
<keyword id="KW-0694">RNA-binding</keyword>
<keyword id="KW-0699">rRNA-binding</keyword>
<keyword id="KW-0810">Translation regulation</keyword>
<keyword id="KW-0820">tRNA-binding</keyword>
<dbReference type="EMBL" id="CP001390">
    <property type="protein sequence ID" value="ACM21976.1"/>
    <property type="molecule type" value="Genomic_DNA"/>
</dbReference>
<dbReference type="RefSeq" id="WP_012648703.1">
    <property type="nucleotide sequence ID" value="NC_011979.1"/>
</dbReference>
<dbReference type="SMR" id="B9M6V5"/>
<dbReference type="STRING" id="316067.Geob_3635"/>
<dbReference type="KEGG" id="geo:Geob_3635"/>
<dbReference type="eggNOG" id="COG0081">
    <property type="taxonomic scope" value="Bacteria"/>
</dbReference>
<dbReference type="HOGENOM" id="CLU_062853_0_0_7"/>
<dbReference type="OrthoDB" id="9803740at2"/>
<dbReference type="Proteomes" id="UP000007721">
    <property type="component" value="Chromosome"/>
</dbReference>
<dbReference type="GO" id="GO:0022625">
    <property type="term" value="C:cytosolic large ribosomal subunit"/>
    <property type="evidence" value="ECO:0007669"/>
    <property type="project" value="TreeGrafter"/>
</dbReference>
<dbReference type="GO" id="GO:0019843">
    <property type="term" value="F:rRNA binding"/>
    <property type="evidence" value="ECO:0007669"/>
    <property type="project" value="UniProtKB-UniRule"/>
</dbReference>
<dbReference type="GO" id="GO:0003735">
    <property type="term" value="F:structural constituent of ribosome"/>
    <property type="evidence" value="ECO:0007669"/>
    <property type="project" value="InterPro"/>
</dbReference>
<dbReference type="GO" id="GO:0000049">
    <property type="term" value="F:tRNA binding"/>
    <property type="evidence" value="ECO:0007669"/>
    <property type="project" value="UniProtKB-KW"/>
</dbReference>
<dbReference type="GO" id="GO:0006417">
    <property type="term" value="P:regulation of translation"/>
    <property type="evidence" value="ECO:0007669"/>
    <property type="project" value="UniProtKB-KW"/>
</dbReference>
<dbReference type="GO" id="GO:0006412">
    <property type="term" value="P:translation"/>
    <property type="evidence" value="ECO:0007669"/>
    <property type="project" value="UniProtKB-UniRule"/>
</dbReference>
<dbReference type="CDD" id="cd00403">
    <property type="entry name" value="Ribosomal_L1"/>
    <property type="match status" value="1"/>
</dbReference>
<dbReference type="FunFam" id="3.40.50.790:FF:000001">
    <property type="entry name" value="50S ribosomal protein L1"/>
    <property type="match status" value="1"/>
</dbReference>
<dbReference type="Gene3D" id="3.30.190.20">
    <property type="match status" value="1"/>
</dbReference>
<dbReference type="Gene3D" id="3.40.50.790">
    <property type="match status" value="1"/>
</dbReference>
<dbReference type="HAMAP" id="MF_01318_B">
    <property type="entry name" value="Ribosomal_uL1_B"/>
    <property type="match status" value="1"/>
</dbReference>
<dbReference type="InterPro" id="IPR005878">
    <property type="entry name" value="Ribosom_uL1_bac-type"/>
</dbReference>
<dbReference type="InterPro" id="IPR002143">
    <property type="entry name" value="Ribosomal_uL1"/>
</dbReference>
<dbReference type="InterPro" id="IPR023674">
    <property type="entry name" value="Ribosomal_uL1-like"/>
</dbReference>
<dbReference type="InterPro" id="IPR028364">
    <property type="entry name" value="Ribosomal_uL1/biogenesis"/>
</dbReference>
<dbReference type="InterPro" id="IPR016095">
    <property type="entry name" value="Ribosomal_uL1_3-a/b-sand"/>
</dbReference>
<dbReference type="InterPro" id="IPR023673">
    <property type="entry name" value="Ribosomal_uL1_CS"/>
</dbReference>
<dbReference type="NCBIfam" id="TIGR01169">
    <property type="entry name" value="rplA_bact"/>
    <property type="match status" value="1"/>
</dbReference>
<dbReference type="PANTHER" id="PTHR36427">
    <property type="entry name" value="54S RIBOSOMAL PROTEIN L1, MITOCHONDRIAL"/>
    <property type="match status" value="1"/>
</dbReference>
<dbReference type="PANTHER" id="PTHR36427:SF3">
    <property type="entry name" value="LARGE RIBOSOMAL SUBUNIT PROTEIN UL1M"/>
    <property type="match status" value="1"/>
</dbReference>
<dbReference type="Pfam" id="PF00687">
    <property type="entry name" value="Ribosomal_L1"/>
    <property type="match status" value="1"/>
</dbReference>
<dbReference type="PIRSF" id="PIRSF002155">
    <property type="entry name" value="Ribosomal_L1"/>
    <property type="match status" value="1"/>
</dbReference>
<dbReference type="SUPFAM" id="SSF56808">
    <property type="entry name" value="Ribosomal protein L1"/>
    <property type="match status" value="1"/>
</dbReference>
<dbReference type="PROSITE" id="PS01199">
    <property type="entry name" value="RIBOSOMAL_L1"/>
    <property type="match status" value="1"/>
</dbReference>
<comment type="function">
    <text evidence="1">Binds directly to 23S rRNA. The L1 stalk is quite mobile in the ribosome, and is involved in E site tRNA release.</text>
</comment>
<comment type="function">
    <text evidence="1">Protein L1 is also a translational repressor protein, it controls the translation of the L11 operon by binding to its mRNA.</text>
</comment>
<comment type="subunit">
    <text evidence="1">Part of the 50S ribosomal subunit.</text>
</comment>
<comment type="similarity">
    <text evidence="1">Belongs to the universal ribosomal protein uL1 family.</text>
</comment>
<accession>B9M6V5</accession>
<name>RL1_GEODF</name>
<reference key="1">
    <citation type="submission" date="2009-01" db="EMBL/GenBank/DDBJ databases">
        <title>Complete sequence of Geobacter sp. FRC-32.</title>
        <authorList>
            <consortium name="US DOE Joint Genome Institute"/>
            <person name="Lucas S."/>
            <person name="Copeland A."/>
            <person name="Lapidus A."/>
            <person name="Glavina del Rio T."/>
            <person name="Dalin E."/>
            <person name="Tice H."/>
            <person name="Bruce D."/>
            <person name="Goodwin L."/>
            <person name="Pitluck S."/>
            <person name="Saunders E."/>
            <person name="Brettin T."/>
            <person name="Detter J.C."/>
            <person name="Han C."/>
            <person name="Larimer F."/>
            <person name="Land M."/>
            <person name="Hauser L."/>
            <person name="Kyrpides N."/>
            <person name="Ovchinnikova G."/>
            <person name="Kostka J."/>
            <person name="Richardson P."/>
        </authorList>
    </citation>
    <scope>NUCLEOTIDE SEQUENCE [LARGE SCALE GENOMIC DNA]</scope>
    <source>
        <strain>DSM 22248 / JCM 15807 / FRC-32</strain>
    </source>
</reference>
<feature type="chain" id="PRO_1000165681" description="Large ribosomal subunit protein uL1">
    <location>
        <begin position="1"/>
        <end position="233"/>
    </location>
</feature>